<proteinExistence type="evidence at protein level"/>
<comment type="function">
    <molecule>Gag-Pol polyprotein</molecule>
    <text evidence="1">Mediates, with Gag polyprotein, the essential events in virion assembly, including binding the plasma membrane, making the protein-protein interactions necessary to create spherical particles, recruiting the viral Env proteins, and packaging the genomic RNA via direct interactions with the RNA packaging sequence.</text>
</comment>
<comment type="function">
    <molecule>Matrix protein p16</molecule>
    <text evidence="2">Targets the polyprotein to the plasma membrane.</text>
</comment>
<comment type="function">
    <molecule>Capsid protein p25</molecule>
    <text evidence="1">Forms the core that encapsulates the genomic RNA-nucleocapsid complex in the virion.</text>
</comment>
<comment type="function">
    <molecule>Nucleocapsid protein p14</molecule>
    <text evidence="1">Encapsulates and protects viral dimeric unspliced genomic RNA (gRNA). Binds these RNAs through its zinc fingers. Acts as a nucleic acid chaperone which is involved in rearrangement of nucleic acid secondary structure during gRNA retrotranscription. Also facilitates template switch leading to recombination.</text>
</comment>
<comment type="function">
    <molecule>Protease</molecule>
    <text evidence="6">The aspartyl protease mediates proteolytic cleavages of Gag and Gag-Pol polyproteins during or shortly after the release of the virion from the plasma membrane. Cleavages take place as an ordered, step-wise cascade to yield mature proteins. This process is called maturation. Displays maximal activity during the budding process just prior to particle release from the cell.</text>
</comment>
<comment type="function">
    <molecule>Reverse transcriptase/ribonuclease H</molecule>
    <text evidence="7">RT is a multifunctional enzyme that converts the viral dimeric RNA genome into dsDNA in the cytoplasm, shortly after virus entry into the cell. This enzyme displays a DNA polymerase activity that can copy either DNA or RNA templates, and a ribonuclease H (RNase H) activity that cleaves the RNA strand of RNA-DNA heteroduplexes in a partially processive 3' to 5' endonucleasic mode. Conversion of viral genomic RNA into dsDNA requires many steps. A tRNA-Trp binds to the primer-binding site (PBS) situated at the 5' end of the viral RNA. RT uses the 3' end of the tRNA primer to perfom a short round of RNA-dependent minus-strand DNA synthesis. The reading proceeds through the U5 region and ends after the repeated (R) region which is present at both ends of viral RNA. The portion of the RNA-DNA heteroduplex is digested by the RNase H, resulting in a ssDNA product attached to the tRNA primer. This ssDNA/tRNA hybridizes with the identical R region situated at the 3' end of viral RNA. This template exchange, known as minus-strand DNA strong stop transfer, can be either intra- or intermolecular. RT uses the 3' end of this newly synthesized short ssDNA to perfom the RNA-dependent minus-strand DNA synthesis of the whole template. RNase H digests the RNA template except for a polypurine tract (PPT) situated at the 5' end of the genome. It is not clear if both polymerase and RNase H activities are simultaneous. RNase H probably can proceed both in a polymerase-dependent (RNA cut into small fragments by the same RT performing DNA synthesis) and a polymerase-independent mode (cleavage of remaining RNA fragments by free RTs). Secondly, RT performs DNA-directed plus-strand DNA synthesis using the PPT that has not been removed by RNase H as primers. PPT and tRNA primers are then removed by RNase H. The 3' and 5' ssDNA PBS regions hybridize to form a circular dsDNA intermediate. Strand displacement synthesis by RT to the PBS and PPT ends produces a blunt ended, linear dsDNA copy of the viral genome that includes long terminal repeats (LTRs) at both ends.</text>
</comment>
<comment type="function">
    <molecule>Integrase</molecule>
    <text evidence="12">Catalyzes viral DNA integration into the host chromosome, by performing a series of DNA cutting and joining reactions.</text>
</comment>
<comment type="catalytic activity">
    <reaction evidence="8">
        <text>Endonucleolytic cleavage to 5'-phosphomonoester.</text>
        <dbReference type="EC" id="3.1.26.4"/>
    </reaction>
</comment>
<comment type="catalytic activity">
    <reaction>
        <text>3'-end directed exonucleolytic cleavage of viral RNA-DNA hybrid.</text>
        <dbReference type="EC" id="3.1.13.2"/>
    </reaction>
</comment>
<comment type="catalytic activity">
    <reaction>
        <text>dUTP + H2O = dUMP + diphosphate + H(+)</text>
        <dbReference type="Rhea" id="RHEA:10248"/>
        <dbReference type="ChEBI" id="CHEBI:15377"/>
        <dbReference type="ChEBI" id="CHEBI:15378"/>
        <dbReference type="ChEBI" id="CHEBI:33019"/>
        <dbReference type="ChEBI" id="CHEBI:61555"/>
        <dbReference type="ChEBI" id="CHEBI:246422"/>
        <dbReference type="EC" id="3.6.1.23"/>
    </reaction>
</comment>
<comment type="catalytic activity">
    <reaction evidence="7">
        <text>DNA(n) + a 2'-deoxyribonucleoside 5'-triphosphate = DNA(n+1) + diphosphate</text>
        <dbReference type="Rhea" id="RHEA:22508"/>
        <dbReference type="Rhea" id="RHEA-COMP:17339"/>
        <dbReference type="Rhea" id="RHEA-COMP:17340"/>
        <dbReference type="ChEBI" id="CHEBI:33019"/>
        <dbReference type="ChEBI" id="CHEBI:61560"/>
        <dbReference type="ChEBI" id="CHEBI:173112"/>
        <dbReference type="EC" id="2.7.7.49"/>
    </reaction>
</comment>
<comment type="catalytic activity">
    <reaction evidence="7">
        <text>DNA(n) + a 2'-deoxyribonucleoside 5'-triphosphate = DNA(n+1) + diphosphate</text>
        <dbReference type="Rhea" id="RHEA:22508"/>
        <dbReference type="Rhea" id="RHEA-COMP:17339"/>
        <dbReference type="Rhea" id="RHEA-COMP:17340"/>
        <dbReference type="ChEBI" id="CHEBI:33019"/>
        <dbReference type="ChEBI" id="CHEBI:61560"/>
        <dbReference type="ChEBI" id="CHEBI:173112"/>
        <dbReference type="EC" id="2.7.7.7"/>
    </reaction>
</comment>
<comment type="cofactor">
    <cofactor evidence="7">
        <name>Mg(2+)</name>
        <dbReference type="ChEBI" id="CHEBI:18420"/>
    </cofactor>
    <text evidence="7">The RT polymerase active site binds 2 magnesium ions.</text>
</comment>
<comment type="subunit">
    <molecule>Integrase</molecule>
    <text evidence="4">Homotetramer; further associates as a homohexadecamer.</text>
</comment>
<comment type="subcellular location">
    <molecule>Matrix protein p16</molecule>
    <subcellularLocation>
        <location evidence="13">Virion</location>
    </subcellularLocation>
</comment>
<comment type="subcellular location">
    <molecule>Capsid protein p25</molecule>
    <subcellularLocation>
        <location evidence="13">Virion</location>
    </subcellularLocation>
</comment>
<comment type="subcellular location">
    <molecule>Nucleocapsid protein p14</molecule>
    <subcellularLocation>
        <location evidence="13">Virion</location>
    </subcellularLocation>
</comment>
<comment type="alternative products">
    <event type="ribosomal frameshifting"/>
    <isoform>
        <id>P03370-1</id>
        <name>Gag-Pol polyprotein</name>
        <sequence type="displayed"/>
    </isoform>
    <isoform>
        <id>P03352-1</id>
        <name>Gag polyprotein</name>
        <sequence type="external"/>
    </isoform>
</comment>
<comment type="PTM">
    <molecule>Gag-Pol polyprotein</molecule>
    <text evidence="13">Specific enzymatic cleavages by the viral protease yield mature proteins.</text>
</comment>
<comment type="miscellaneous">
    <text evidence="7">The reverse transcriptase is an error-prone enzyme that lacks a proof-reading function. High mutations rate is a direct consequence of this characteristic. RT also displays frequent template switching leading to high recombination rate. Recombination mostly occurs between homologous regions of the two copackaged RNA genomes. If these two RNA molecules derive from different viral strains, reverse transcription will give rise to highly recombinated proviral DNAs.</text>
</comment>
<comment type="miscellaneous">
    <molecule>Isoform Gag-Pol polyprotein</molecule>
    <text evidence="4">Produced by a -1 ribosomal frameshifting between gag and pol.</text>
</comment>
<comment type="similarity">
    <text evidence="13">Belongs to the retroviral Pol polyprotein family.</text>
</comment>
<comment type="sequence caution" evidence="13">
    <conflict type="erroneous gene model prediction">
        <sequence resource="EMBL-CDS" id="AAA17521"/>
    </conflict>
</comment>
<comment type="sequence caution" evidence="13">
    <conflict type="erroneous gene model prediction">
        <sequence resource="EMBL-CDS" id="AAA48354"/>
    </conflict>
</comment>
<evidence type="ECO:0000250" key="1">
    <source>
        <dbReference type="UniProtKB" id="P04585"/>
    </source>
</evidence>
<evidence type="ECO:0000250" key="2">
    <source>
        <dbReference type="UniProtKB" id="P12497"/>
    </source>
</evidence>
<evidence type="ECO:0000250" key="3">
    <source>
        <dbReference type="UniProtKB" id="P35955"/>
    </source>
</evidence>
<evidence type="ECO:0000250" key="4">
    <source>
        <dbReference type="UniProtKB" id="P35956"/>
    </source>
</evidence>
<evidence type="ECO:0000255" key="5">
    <source>
        <dbReference type="PROSITE-ProRule" id="PRU00047"/>
    </source>
</evidence>
<evidence type="ECO:0000255" key="6">
    <source>
        <dbReference type="PROSITE-ProRule" id="PRU00275"/>
    </source>
</evidence>
<evidence type="ECO:0000255" key="7">
    <source>
        <dbReference type="PROSITE-ProRule" id="PRU00405"/>
    </source>
</evidence>
<evidence type="ECO:0000255" key="8">
    <source>
        <dbReference type="PROSITE-ProRule" id="PRU00408"/>
    </source>
</evidence>
<evidence type="ECO:0000255" key="9">
    <source>
        <dbReference type="PROSITE-ProRule" id="PRU00450"/>
    </source>
</evidence>
<evidence type="ECO:0000255" key="10">
    <source>
        <dbReference type="PROSITE-ProRule" id="PRU00457"/>
    </source>
</evidence>
<evidence type="ECO:0000255" key="11">
    <source>
        <dbReference type="PROSITE-ProRule" id="PRU00506"/>
    </source>
</evidence>
<evidence type="ECO:0000269" key="12">
    <source>
    </source>
</evidence>
<evidence type="ECO:0000305" key="13"/>
<reference key="1">
    <citation type="journal article" date="1985" name="Cell">
        <title>Nucleotide sequence of the visna lentivirus: relationship to the AIDS virus.</title>
        <authorList>
            <person name="Sonigo P."/>
            <person name="Alizon M."/>
            <person name="Staskus K."/>
            <person name="Klatzmann D."/>
            <person name="Cole S."/>
            <person name="Danos O."/>
            <person name="Retzel E."/>
            <person name="Tiollais P."/>
            <person name="Haase A."/>
            <person name="Wain-Hobson S."/>
        </authorList>
    </citation>
    <scope>NUCLEOTIDE SEQUENCE [GENOMIC RNA]</scope>
</reference>
<reference key="2">
    <citation type="journal article" date="1987" name="J. Virol.">
        <title>The visna virus genome: evidence for a hypervariable site in the env gene and sequence homology among lentivirus envelope proteins.</title>
        <authorList>
            <person name="Braun M.J."/>
            <person name="Clements J.E."/>
            <person name="Gonda M.A."/>
        </authorList>
    </citation>
    <scope>NUCLEOTIDE SEQUENCE [GENOMIC RNA]</scope>
</reference>
<reference key="3">
    <citation type="journal article" date="1994" name="J. Virol.">
        <title>In vitro activities of purified visna virus integrase.</title>
        <authorList>
            <person name="Katzman M."/>
            <person name="Sudol M."/>
        </authorList>
    </citation>
    <scope>FUNCTION (INTEGRASE)</scope>
    <scope>CATALYTIC ACTIVITY (INTEGRASE)</scope>
</reference>
<name>POL_VILV</name>
<sequence>MAKQGSKEKKGYPELKEVIKATCKIRVGPGKETLTEGNCLWALKTIDFIFEDLKTEPWTITKMYTVWDRLKGLTPEETSKREFASLQATLACIMCSQMGMKPETVQAAKGIISMKEGLHENKEAKGEKVEQLYPNLEKHREVYPIVNLQAGGRSWKAVESVVFQQLQTVAMQHGLVSEDFERQLAYYATTWTSKDILEVLAMMPGNRAQKELIQGKLNEEAERWVRQNPPGPNVLTVDQIMGVGQTNQQASQANMDQARQICLQWVITALRSVRHMSHRPGNPMLVKQKNTESYEDFIARLLEAIDAEPVTDPIKTYLKVTLSYTNASTDCQKQMDRTLGTRVQQATVEEKMQACRDVGSEGFKMQLLAQALRPQGKAGHKGVNQKCYNCGKPGHLARQCRQGIICHHCGKRGHMQKDCRQKKQQGKQQEGATCGAVRAPYVVTEAPPKIEIKVGTRWKKLLVDTGADKTIVTSHDMSGIPKGRIILQGIGGIIEGEKWEQVHLQYKDKMIKGTIVVLATSPVEVLGRDNMRELGIGLIMANLEEKKIPSTRVRLKEGCKGPHIAQWPLTQEKLEGLKEIVDRLEKEGKVGRAPPHWTCNTPIFCIKKKSGKWRMLIDFRELNKQTEDLAEAQLGLPHPGGLQRKKHVTILDIGDAYFTIPLYEPYRQYTCFTMLSPNNLGPCVRYYWKVLPQGWKLSPAVYQFTMQKILRGWIEEHPMIQFGIYMDDIYIGSDLGLEEHRGIVNELASYIAQYGFMLPEDKRQEGYPAKWLGFELHPEKWKFQKHTLPEITEGPITLNKLQKLVGDLVWRQSLIGKSIPNILKLMEGDRALQSERYIESIHVREWEACRQKLKEMEGNYYDEEKDIYGQLDWGNKAIEYIVFQEKGKPLWVNVVHSIKNLSQAQQIIKAAQKLTQEVIIRTGKIPWILLPGREEDWILELQMGNINWMPSFWSCYKGSVRWKKRNVIAELVPGPTYYTDGGKKNGRGSLGYIASTGEKFRIHEEGTNQQLELRAIEEACKQGPEKMNIVTDSRYAYEFMLRNWDEEVIRNPIQARIMELVHNKEKIGVHWVPGHKGIPQNEEIDRYISEIFLAKEGRGILQKRAEDAGYDLICPQEISIPAGQVKRIAIDLKINLKKDQWAMIGTKSSFANKGVFVQGGIIDSGYQGTIQVVIYNSNNKEVVIPQGRKFAQLILMPLIHEELEPWGETRKTERGEQGFGSTGMYWIENIPLAEEEHNKWHQDAVSLHLEFGIPRTAAEDIVQQCDVCQENKMPSTLRGSNKRGIDHWQVDYTHYEDKIILVWVETNSGLIYAERVKGETGQEFRVQTMKWYAMFAPKSLQSDNGPAFVAESTQLLMKYLGIEHTTGIPWNPQSQALVERTHQTLKNTLEKLIPMFNAFESALAGTLITLNIKRKGGLGTSPMDIFIFNKEQQRIQQQSKSKQEKIRFCYYRTRKRGHPGEWQGPTQVLWGGDGAIVVKDRGTDRYLVIANKDVKFIPPPKEIQKE</sequence>
<accession>P03370</accession>
<organismHost>
    <name type="scientific">Ovis aries</name>
    <name type="common">Sheep</name>
    <dbReference type="NCBI Taxonomy" id="9940"/>
</organismHost>
<keyword id="KW-0064">Aspartyl protease</keyword>
<keyword id="KW-0167">Capsid protein</keyword>
<keyword id="KW-0229">DNA integration</keyword>
<keyword id="KW-0233">DNA recombination</keyword>
<keyword id="KW-0238">DNA-binding</keyword>
<keyword id="KW-0255">Endonuclease</keyword>
<keyword id="KW-0378">Hydrolase</keyword>
<keyword id="KW-0460">Magnesium</keyword>
<keyword id="KW-0479">Metal-binding</keyword>
<keyword id="KW-0511">Multifunctional enzyme</keyword>
<keyword id="KW-0540">Nuclease</keyword>
<keyword id="KW-0546">Nucleotide metabolism</keyword>
<keyword id="KW-0548">Nucleotidyltransferase</keyword>
<keyword id="KW-0645">Protease</keyword>
<keyword id="KW-0677">Repeat</keyword>
<keyword id="KW-0688">Ribosomal frameshifting</keyword>
<keyword id="KW-0695">RNA-directed DNA polymerase</keyword>
<keyword id="KW-0808">Transferase</keyword>
<keyword id="KW-1179">Viral genome integration</keyword>
<keyword id="KW-0946">Virion</keyword>
<keyword id="KW-1160">Virus entry into host cell</keyword>
<keyword id="KW-0862">Zinc</keyword>
<keyword id="KW-0863">Zinc-finger</keyword>
<organism>
    <name type="scientific">Maedi visna virus (strain 1514)</name>
    <name type="common">MVV</name>
    <name type="synonym">Visna lentivirus</name>
    <dbReference type="NCBI Taxonomy" id="11742"/>
    <lineage>
        <taxon>Viruses</taxon>
        <taxon>Riboviria</taxon>
        <taxon>Pararnavirae</taxon>
        <taxon>Artverviricota</taxon>
        <taxon>Revtraviricetes</taxon>
        <taxon>Ortervirales</taxon>
        <taxon>Retroviridae</taxon>
        <taxon>Orthoretrovirinae</taxon>
        <taxon>Lentivirus</taxon>
        <taxon>Visna-maedi virus</taxon>
    </lineage>
</organism>
<feature type="chain" id="PRO_0000443358" description="Gag-Pol polyprotein">
    <location>
        <begin position="1"/>
        <end position="1506"/>
    </location>
</feature>
<feature type="chain" id="PRO_0000443359" description="Matrix protein p16">
    <location>
        <begin position="1"/>
        <end position="143"/>
    </location>
</feature>
<feature type="chain" id="PRO_0000443360" description="Capsid protein p25">
    <location>
        <begin position="144"/>
        <end position="363"/>
    </location>
</feature>
<feature type="chain" id="PRO_0000443361" description="Nucleocapsid protein p14">
    <location>
        <begin position="364"/>
        <end position="442"/>
    </location>
</feature>
<feature type="chain" id="PRO_0000038857" description="Protease">
    <location>
        <begin position="443"/>
        <end position="540"/>
    </location>
</feature>
<feature type="chain" id="PRO_0000038858" description="Reverse transcriptase/ribonuclease H">
    <location>
        <begin position="541"/>
        <end position="1111"/>
    </location>
</feature>
<feature type="chain" id="PRO_0000038859" description="Deoxyuridine 5'-triphosphate nucleotidohydrolase">
    <location>
        <begin position="1112"/>
        <end position="1225"/>
    </location>
</feature>
<feature type="chain" id="PRO_0000038860" description="Integrase">
    <location>
        <begin position="1226"/>
        <end position="1506"/>
    </location>
</feature>
<feature type="domain" description="Peptidase A2" evidence="6">
    <location>
        <begin position="459"/>
        <end position="530"/>
    </location>
</feature>
<feature type="domain" description="Reverse transcriptase" evidence="7">
    <location>
        <begin position="587"/>
        <end position="776"/>
    </location>
</feature>
<feature type="domain" description="RNase H type-1" evidence="8">
    <location>
        <begin position="971"/>
        <end position="1093"/>
    </location>
</feature>
<feature type="domain" description="Integrase catalytic" evidence="10">
    <location>
        <begin position="1270"/>
        <end position="1430"/>
    </location>
</feature>
<feature type="zinc finger region" description="CCHC-type 1" evidence="5">
    <location>
        <begin position="385"/>
        <end position="402"/>
    </location>
</feature>
<feature type="zinc finger region" description="CCHC-type 2" evidence="5">
    <location>
        <begin position="404"/>
        <end position="421"/>
    </location>
</feature>
<feature type="zinc finger region" description="Integrase-type" evidence="9">
    <location>
        <begin position="1228"/>
        <end position="1269"/>
    </location>
</feature>
<feature type="DNA-binding region" description="Integrase-type" evidence="11">
    <location>
        <begin position="1447"/>
        <end position="1499"/>
    </location>
</feature>
<feature type="active site" description="Protease; shared with dimeric partner" evidence="6">
    <location>
        <position position="464"/>
    </location>
</feature>
<feature type="binding site" evidence="7">
    <location>
        <position position="652"/>
    </location>
    <ligand>
        <name>Mg(2+)</name>
        <dbReference type="ChEBI" id="CHEBI:18420"/>
        <label>1</label>
        <note>catalytic; for reverse transcriptase activity</note>
    </ligand>
</feature>
<feature type="binding site" evidence="7">
    <location>
        <position position="727"/>
    </location>
    <ligand>
        <name>Mg(2+)</name>
        <dbReference type="ChEBI" id="CHEBI:18420"/>
        <label>1</label>
        <note>catalytic; for reverse transcriptase activity</note>
    </ligand>
</feature>
<feature type="binding site" evidence="7">
    <location>
        <position position="728"/>
    </location>
    <ligand>
        <name>Mg(2+)</name>
        <dbReference type="ChEBI" id="CHEBI:18420"/>
        <label>1</label>
        <note>catalytic; for reverse transcriptase activity</note>
    </ligand>
</feature>
<feature type="binding site" evidence="8">
    <location>
        <position position="980"/>
    </location>
    <ligand>
        <name>Mg(2+)</name>
        <dbReference type="ChEBI" id="CHEBI:18420"/>
        <label>2</label>
        <note>catalytic; for RNase H activity</note>
    </ligand>
</feature>
<feature type="binding site" evidence="8">
    <location>
        <position position="1012"/>
    </location>
    <ligand>
        <name>Mg(2+)</name>
        <dbReference type="ChEBI" id="CHEBI:18420"/>
        <label>2</label>
        <note>catalytic; for RNase H activity</note>
    </ligand>
</feature>
<feature type="binding site" evidence="8">
    <location>
        <position position="1032"/>
    </location>
    <ligand>
        <name>Mg(2+)</name>
        <dbReference type="ChEBI" id="CHEBI:18420"/>
        <label>2</label>
        <note>catalytic; for RNase H activity</note>
    </ligand>
</feature>
<feature type="binding site" evidence="8">
    <location>
        <position position="1085"/>
    </location>
    <ligand>
        <name>Mg(2+)</name>
        <dbReference type="ChEBI" id="CHEBI:18420"/>
        <label>2</label>
        <note>catalytic; for RNase H activity</note>
    </ligand>
</feature>
<feature type="binding site" evidence="9">
    <location>
        <position position="1237"/>
    </location>
    <ligand>
        <name>Zn(2+)</name>
        <dbReference type="ChEBI" id="CHEBI:29105"/>
    </ligand>
</feature>
<feature type="binding site" evidence="9">
    <location>
        <position position="1241"/>
    </location>
    <ligand>
        <name>Zn(2+)</name>
        <dbReference type="ChEBI" id="CHEBI:29105"/>
    </ligand>
</feature>
<feature type="binding site" evidence="9">
    <location>
        <position position="1265"/>
    </location>
    <ligand>
        <name>Zn(2+)</name>
        <dbReference type="ChEBI" id="CHEBI:29105"/>
    </ligand>
</feature>
<feature type="binding site" evidence="9">
    <location>
        <position position="1268"/>
    </location>
    <ligand>
        <name>Zn(2+)</name>
        <dbReference type="ChEBI" id="CHEBI:29105"/>
    </ligand>
</feature>
<feature type="binding site" evidence="10">
    <location>
        <position position="1291"/>
    </location>
    <ligand>
        <name>Mg(2+)</name>
        <dbReference type="ChEBI" id="CHEBI:18420"/>
        <label>3</label>
        <note>catalytic; for integrase activity</note>
    </ligand>
</feature>
<feature type="binding site" evidence="10">
    <location>
        <position position="1343"/>
    </location>
    <ligand>
        <name>Mg(2+)</name>
        <dbReference type="ChEBI" id="CHEBI:18420"/>
        <label>3</label>
        <note>catalytic; for integrase activity</note>
    </ligand>
</feature>
<feature type="binding site" evidence="13">
    <location>
        <position position="1379"/>
    </location>
    <ligand>
        <name>Mg(2+)</name>
        <dbReference type="ChEBI" id="CHEBI:18420"/>
        <label>3</label>
        <note>catalytic; for integrase activity</note>
    </ligand>
</feature>
<feature type="site" description="Cleavage; by viral protease" evidence="3">
    <location>
        <begin position="363"/>
        <end position="364"/>
    </location>
</feature>
<protein>
    <recommendedName>
        <fullName>Gag-Pol polyprotein</fullName>
    </recommendedName>
    <component>
        <recommendedName>
            <fullName>Matrix protein p16</fullName>
        </recommendedName>
    </component>
    <component>
        <recommendedName>
            <fullName>Capsid protein p25</fullName>
        </recommendedName>
    </component>
    <component>
        <recommendedName>
            <fullName>Nucleocapsid protein p14</fullName>
        </recommendedName>
    </component>
    <component>
        <recommendedName>
            <fullName>Protease</fullName>
            <ecNumber evidence="6">3.4.23.-</ecNumber>
        </recommendedName>
        <alternativeName>
            <fullName>Retropepsin</fullName>
        </alternativeName>
    </component>
    <component>
        <recommendedName>
            <fullName>Reverse transcriptase/ribonuclease H</fullName>
            <shortName>RT</shortName>
            <ecNumber evidence="7">2.7.7.49</ecNumber>
            <ecNumber evidence="7">2.7.7.7</ecNumber>
            <ecNumber evidence="8">3.1.26.4</ecNumber>
        </recommendedName>
        <alternativeName>
            <fullName>Exoribonuclease H</fullName>
            <ecNumber>3.1.13.2</ecNumber>
        </alternativeName>
    </component>
    <component>
        <recommendedName>
            <fullName>Deoxyuridine 5'-triphosphate nucleotidohydrolase</fullName>
            <shortName>dUTPase</shortName>
            <ecNumber evidence="13">3.6.1.23</ecNumber>
        </recommendedName>
    </component>
    <component>
        <recommendedName>
            <fullName>Integrase</fullName>
            <shortName>IN</shortName>
            <ecNumber evidence="12">2.7.7.-</ecNumber>
            <ecNumber evidence="12">3.1.-.-</ecNumber>
        </recommendedName>
    </component>
</protein>
<gene>
    <name type="primary">pol</name>
</gene>
<dbReference type="EC" id="3.4.23.-" evidence="6"/>
<dbReference type="EC" id="2.7.7.49" evidence="7"/>
<dbReference type="EC" id="2.7.7.7" evidence="7"/>
<dbReference type="EC" id="3.1.26.4" evidence="8"/>
<dbReference type="EC" id="3.1.13.2"/>
<dbReference type="EC" id="3.6.1.23" evidence="13"/>
<dbReference type="EC" id="2.7.7.-" evidence="12"/>
<dbReference type="EC" id="3.1.-.-" evidence="12"/>
<dbReference type="EMBL" id="M10608">
    <property type="protein sequence ID" value="AAA17521.1"/>
    <property type="status" value="ALT_SEQ"/>
    <property type="molecule type" value="Unassigned_DNA"/>
</dbReference>
<dbReference type="EMBL" id="M51543">
    <property type="protein sequence ID" value="AAA48354.1"/>
    <property type="status" value="ALT_SEQ"/>
    <property type="molecule type" value="Genomic_RNA"/>
</dbReference>
<dbReference type="PIR" id="A03969">
    <property type="entry name" value="GNLJVS"/>
</dbReference>
<dbReference type="SMR" id="P03370"/>
<dbReference type="MEROPS" id="A02.006"/>
<dbReference type="Proteomes" id="UP000106909">
    <property type="component" value="Genome"/>
</dbReference>
<dbReference type="Proteomes" id="UP000158691">
    <property type="component" value="Genome"/>
</dbReference>
<dbReference type="GO" id="GO:0019028">
    <property type="term" value="C:viral capsid"/>
    <property type="evidence" value="ECO:0007669"/>
    <property type="project" value="UniProtKB-KW"/>
</dbReference>
<dbReference type="GO" id="GO:0004190">
    <property type="term" value="F:aspartic-type endopeptidase activity"/>
    <property type="evidence" value="ECO:0007669"/>
    <property type="project" value="UniProtKB-KW"/>
</dbReference>
<dbReference type="GO" id="GO:0003677">
    <property type="term" value="F:DNA binding"/>
    <property type="evidence" value="ECO:0007669"/>
    <property type="project" value="UniProtKB-KW"/>
</dbReference>
<dbReference type="GO" id="GO:0003887">
    <property type="term" value="F:DNA-directed DNA polymerase activity"/>
    <property type="evidence" value="ECO:0007669"/>
    <property type="project" value="UniProtKB-EC"/>
</dbReference>
<dbReference type="GO" id="GO:0004170">
    <property type="term" value="F:dUTP diphosphatase activity"/>
    <property type="evidence" value="ECO:0007669"/>
    <property type="project" value="UniProtKB-EC"/>
</dbReference>
<dbReference type="GO" id="GO:0004533">
    <property type="term" value="F:exoribonuclease H activity"/>
    <property type="evidence" value="ECO:0007669"/>
    <property type="project" value="UniProtKB-EC"/>
</dbReference>
<dbReference type="GO" id="GO:0035613">
    <property type="term" value="F:RNA stem-loop binding"/>
    <property type="evidence" value="ECO:0007669"/>
    <property type="project" value="TreeGrafter"/>
</dbReference>
<dbReference type="GO" id="GO:0003964">
    <property type="term" value="F:RNA-directed DNA polymerase activity"/>
    <property type="evidence" value="ECO:0007669"/>
    <property type="project" value="UniProtKB-KW"/>
</dbReference>
<dbReference type="GO" id="GO:0004523">
    <property type="term" value="F:RNA-DNA hybrid ribonuclease activity"/>
    <property type="evidence" value="ECO:0007669"/>
    <property type="project" value="UniProtKB-EC"/>
</dbReference>
<dbReference type="GO" id="GO:0008270">
    <property type="term" value="F:zinc ion binding"/>
    <property type="evidence" value="ECO:0007669"/>
    <property type="project" value="UniProtKB-KW"/>
</dbReference>
<dbReference type="GO" id="GO:0015074">
    <property type="term" value="P:DNA integration"/>
    <property type="evidence" value="ECO:0007669"/>
    <property type="project" value="UniProtKB-KW"/>
</dbReference>
<dbReference type="GO" id="GO:0006310">
    <property type="term" value="P:DNA recombination"/>
    <property type="evidence" value="ECO:0007669"/>
    <property type="project" value="UniProtKB-KW"/>
</dbReference>
<dbReference type="GO" id="GO:0075713">
    <property type="term" value="P:establishment of integrated proviral latency"/>
    <property type="evidence" value="ECO:0007669"/>
    <property type="project" value="UniProtKB-KW"/>
</dbReference>
<dbReference type="GO" id="GO:0009117">
    <property type="term" value="P:nucleotide metabolic process"/>
    <property type="evidence" value="ECO:0007669"/>
    <property type="project" value="UniProtKB-KW"/>
</dbReference>
<dbReference type="GO" id="GO:0006508">
    <property type="term" value="P:proteolysis"/>
    <property type="evidence" value="ECO:0007669"/>
    <property type="project" value="UniProtKB-KW"/>
</dbReference>
<dbReference type="GO" id="GO:0046718">
    <property type="term" value="P:symbiont entry into host cell"/>
    <property type="evidence" value="ECO:0007669"/>
    <property type="project" value="UniProtKB-KW"/>
</dbReference>
<dbReference type="GO" id="GO:0044826">
    <property type="term" value="P:viral genome integration into host DNA"/>
    <property type="evidence" value="ECO:0007669"/>
    <property type="project" value="UniProtKB-KW"/>
</dbReference>
<dbReference type="GO" id="GO:0075523">
    <property type="term" value="P:viral translational frameshifting"/>
    <property type="evidence" value="ECO:0007669"/>
    <property type="project" value="UniProtKB-KW"/>
</dbReference>
<dbReference type="CDD" id="cd07557">
    <property type="entry name" value="trimeric_dUTPase"/>
    <property type="match status" value="1"/>
</dbReference>
<dbReference type="Gene3D" id="1.10.10.200">
    <property type="match status" value="1"/>
</dbReference>
<dbReference type="Gene3D" id="1.10.1200.30">
    <property type="match status" value="1"/>
</dbReference>
<dbReference type="Gene3D" id="2.70.40.10">
    <property type="match status" value="1"/>
</dbReference>
<dbReference type="Gene3D" id="3.30.70.270">
    <property type="match status" value="3"/>
</dbReference>
<dbReference type="Gene3D" id="2.40.70.10">
    <property type="entry name" value="Acid Proteases"/>
    <property type="match status" value="1"/>
</dbReference>
<dbReference type="Gene3D" id="3.10.10.10">
    <property type="entry name" value="HIV Type 1 Reverse Transcriptase, subunit A, domain 1"/>
    <property type="match status" value="1"/>
</dbReference>
<dbReference type="Gene3D" id="1.10.375.10">
    <property type="entry name" value="Human Immunodeficiency Virus Type 1 Capsid Protein"/>
    <property type="match status" value="1"/>
</dbReference>
<dbReference type="Gene3D" id="2.30.30.10">
    <property type="entry name" value="Integrase, C-terminal domain superfamily, retroviral"/>
    <property type="match status" value="1"/>
</dbReference>
<dbReference type="Gene3D" id="3.30.420.10">
    <property type="entry name" value="Ribonuclease H-like superfamily/Ribonuclease H"/>
    <property type="match status" value="2"/>
</dbReference>
<dbReference type="Gene3D" id="4.10.60.10">
    <property type="entry name" value="Zinc finger, CCHC-type"/>
    <property type="match status" value="1"/>
</dbReference>
<dbReference type="InterPro" id="IPR001969">
    <property type="entry name" value="Aspartic_peptidase_AS"/>
</dbReference>
<dbReference type="InterPro" id="IPR043502">
    <property type="entry name" value="DNA/RNA_pol_sf"/>
</dbReference>
<dbReference type="InterPro" id="IPR029054">
    <property type="entry name" value="dUTPase-like"/>
</dbReference>
<dbReference type="InterPro" id="IPR036157">
    <property type="entry name" value="dUTPase-like_sf"/>
</dbReference>
<dbReference type="InterPro" id="IPR033704">
    <property type="entry name" value="dUTPase_trimeric"/>
</dbReference>
<dbReference type="InterPro" id="IPR045345">
    <property type="entry name" value="Gag_p24_C"/>
</dbReference>
<dbReference type="InterPro" id="IPR017856">
    <property type="entry name" value="Integrase-like_N"/>
</dbReference>
<dbReference type="InterPro" id="IPR036862">
    <property type="entry name" value="Integrase_C_dom_sf_retrovir"/>
</dbReference>
<dbReference type="InterPro" id="IPR001037">
    <property type="entry name" value="Integrase_C_retrovir"/>
</dbReference>
<dbReference type="InterPro" id="IPR001584">
    <property type="entry name" value="Integrase_cat-core"/>
</dbReference>
<dbReference type="InterPro" id="IPR003308">
    <property type="entry name" value="Integrase_Zn-bd_dom_N"/>
</dbReference>
<dbReference type="InterPro" id="IPR001995">
    <property type="entry name" value="Peptidase_A2_cat"/>
</dbReference>
<dbReference type="InterPro" id="IPR021109">
    <property type="entry name" value="Peptidase_aspartic_dom_sf"/>
</dbReference>
<dbReference type="InterPro" id="IPR018061">
    <property type="entry name" value="Retropepsins"/>
</dbReference>
<dbReference type="InterPro" id="IPR008916">
    <property type="entry name" value="Retrov_capsid_C"/>
</dbReference>
<dbReference type="InterPro" id="IPR008919">
    <property type="entry name" value="Retrov_capsid_N"/>
</dbReference>
<dbReference type="InterPro" id="IPR043128">
    <property type="entry name" value="Rev_trsase/Diguanyl_cyclase"/>
</dbReference>
<dbReference type="InterPro" id="IPR012337">
    <property type="entry name" value="RNaseH-like_sf"/>
</dbReference>
<dbReference type="InterPro" id="IPR002156">
    <property type="entry name" value="RNaseH_domain"/>
</dbReference>
<dbReference type="InterPro" id="IPR036397">
    <property type="entry name" value="RNaseH_sf"/>
</dbReference>
<dbReference type="InterPro" id="IPR000477">
    <property type="entry name" value="RT_dom"/>
</dbReference>
<dbReference type="InterPro" id="IPR001878">
    <property type="entry name" value="Znf_CCHC"/>
</dbReference>
<dbReference type="InterPro" id="IPR036875">
    <property type="entry name" value="Znf_CCHC_sf"/>
</dbReference>
<dbReference type="PANTHER" id="PTHR41694">
    <property type="entry name" value="ENDOGENOUS RETROVIRUS GROUP K MEMBER POL PROTEIN"/>
    <property type="match status" value="1"/>
</dbReference>
<dbReference type="PANTHER" id="PTHR41694:SF3">
    <property type="entry name" value="RNA-DIRECTED DNA POLYMERASE-RELATED"/>
    <property type="match status" value="1"/>
</dbReference>
<dbReference type="Pfam" id="PF00692">
    <property type="entry name" value="dUTPase"/>
    <property type="match status" value="1"/>
</dbReference>
<dbReference type="Pfam" id="PF00607">
    <property type="entry name" value="Gag_p24"/>
    <property type="match status" value="1"/>
</dbReference>
<dbReference type="Pfam" id="PF19317">
    <property type="entry name" value="Gag_p24_C"/>
    <property type="match status" value="1"/>
</dbReference>
<dbReference type="Pfam" id="PF02022">
    <property type="entry name" value="Integrase_Zn"/>
    <property type="match status" value="1"/>
</dbReference>
<dbReference type="Pfam" id="PF00075">
    <property type="entry name" value="RNase_H"/>
    <property type="match status" value="1"/>
</dbReference>
<dbReference type="Pfam" id="PF00665">
    <property type="entry name" value="rve"/>
    <property type="match status" value="1"/>
</dbReference>
<dbReference type="Pfam" id="PF00077">
    <property type="entry name" value="RVP"/>
    <property type="match status" value="1"/>
</dbReference>
<dbReference type="Pfam" id="PF00078">
    <property type="entry name" value="RVT_1"/>
    <property type="match status" value="1"/>
</dbReference>
<dbReference type="Pfam" id="PF00098">
    <property type="entry name" value="zf-CCHC"/>
    <property type="match status" value="2"/>
</dbReference>
<dbReference type="SMART" id="SM00343">
    <property type="entry name" value="ZnF_C2HC"/>
    <property type="match status" value="2"/>
</dbReference>
<dbReference type="SUPFAM" id="SSF50630">
    <property type="entry name" value="Acid proteases"/>
    <property type="match status" value="1"/>
</dbReference>
<dbReference type="SUPFAM" id="SSF50122">
    <property type="entry name" value="DNA-binding domain of retroviral integrase"/>
    <property type="match status" value="1"/>
</dbReference>
<dbReference type="SUPFAM" id="SSF56672">
    <property type="entry name" value="DNA/RNA polymerases"/>
    <property type="match status" value="1"/>
</dbReference>
<dbReference type="SUPFAM" id="SSF51283">
    <property type="entry name" value="dUTPase-like"/>
    <property type="match status" value="1"/>
</dbReference>
<dbReference type="SUPFAM" id="SSF46919">
    <property type="entry name" value="N-terminal Zn binding domain of HIV integrase"/>
    <property type="match status" value="1"/>
</dbReference>
<dbReference type="SUPFAM" id="SSF47353">
    <property type="entry name" value="Retrovirus capsid dimerization domain-like"/>
    <property type="match status" value="1"/>
</dbReference>
<dbReference type="SUPFAM" id="SSF47943">
    <property type="entry name" value="Retrovirus capsid protein, N-terminal core domain"/>
    <property type="match status" value="1"/>
</dbReference>
<dbReference type="SUPFAM" id="SSF57756">
    <property type="entry name" value="Retrovirus zinc finger-like domains"/>
    <property type="match status" value="1"/>
</dbReference>
<dbReference type="SUPFAM" id="SSF53098">
    <property type="entry name" value="Ribonuclease H-like"/>
    <property type="match status" value="2"/>
</dbReference>
<dbReference type="PROSITE" id="PS50175">
    <property type="entry name" value="ASP_PROT_RETROV"/>
    <property type="match status" value="1"/>
</dbReference>
<dbReference type="PROSITE" id="PS00141">
    <property type="entry name" value="ASP_PROTEASE"/>
    <property type="match status" value="1"/>
</dbReference>
<dbReference type="PROSITE" id="PS50994">
    <property type="entry name" value="INTEGRASE"/>
    <property type="match status" value="1"/>
</dbReference>
<dbReference type="PROSITE" id="PS51027">
    <property type="entry name" value="INTEGRASE_DBD"/>
    <property type="match status" value="1"/>
</dbReference>
<dbReference type="PROSITE" id="PS50879">
    <property type="entry name" value="RNASE_H_1"/>
    <property type="match status" value="1"/>
</dbReference>
<dbReference type="PROSITE" id="PS50878">
    <property type="entry name" value="RT_POL"/>
    <property type="match status" value="1"/>
</dbReference>
<dbReference type="PROSITE" id="PS50158">
    <property type="entry name" value="ZF_CCHC"/>
    <property type="match status" value="2"/>
</dbReference>
<dbReference type="PROSITE" id="PS50876">
    <property type="entry name" value="ZF_INTEGRASE"/>
    <property type="match status" value="1"/>
</dbReference>